<reference key="1">
    <citation type="submission" date="2004-11" db="EMBL/GenBank/DDBJ databases">
        <authorList>
            <consortium name="The German cDNA consortium"/>
        </authorList>
    </citation>
    <scope>NUCLEOTIDE SEQUENCE [LARGE SCALE MRNA]</scope>
    <source>
        <tissue>Brain cortex</tissue>
    </source>
</reference>
<organism>
    <name type="scientific">Pongo abelii</name>
    <name type="common">Sumatran orangutan</name>
    <name type="synonym">Pongo pygmaeus abelii</name>
    <dbReference type="NCBI Taxonomy" id="9601"/>
    <lineage>
        <taxon>Eukaryota</taxon>
        <taxon>Metazoa</taxon>
        <taxon>Chordata</taxon>
        <taxon>Craniata</taxon>
        <taxon>Vertebrata</taxon>
        <taxon>Euteleostomi</taxon>
        <taxon>Mammalia</taxon>
        <taxon>Eutheria</taxon>
        <taxon>Euarchontoglires</taxon>
        <taxon>Primates</taxon>
        <taxon>Haplorrhini</taxon>
        <taxon>Catarrhini</taxon>
        <taxon>Hominidae</taxon>
        <taxon>Pongo</taxon>
    </lineage>
</organism>
<proteinExistence type="evidence at transcript level"/>
<evidence type="ECO:0000250" key="1"/>
<evidence type="ECO:0000255" key="2"/>
<evidence type="ECO:0000256" key="3">
    <source>
        <dbReference type="SAM" id="MobiDB-lite"/>
    </source>
</evidence>
<evidence type="ECO:0000305" key="4"/>
<name>BAP29_PONAB</name>
<keyword id="KW-0053">Apoptosis</keyword>
<keyword id="KW-0175">Coiled coil</keyword>
<keyword id="KW-0256">Endoplasmic reticulum</keyword>
<keyword id="KW-0931">ER-Golgi transport</keyword>
<keyword id="KW-0472">Membrane</keyword>
<keyword id="KW-0653">Protein transport</keyword>
<keyword id="KW-1185">Reference proteome</keyword>
<keyword id="KW-0812">Transmembrane</keyword>
<keyword id="KW-1133">Transmembrane helix</keyword>
<keyword id="KW-0813">Transport</keyword>
<sequence>MTLQWAAVATFLYAEIGLILIFCLPFIPPQRWQKIFSFNVWGKIATFWNKAFLTIIILLIVLFLDAVREVRKYSSVHTIEKSSTSRPDAYEHTQMKLFRSQRNLYISGFSLFFWLVLRRLVTLITQLAKELSNKGVLKTQAENTNKAAKKFMEENEKLKRILKSHGKDEECVLEAENKKLVEDQQKLKTELRKTSDALSKAQNDVMEMKMQSERLSKEYDQLLKEHSELQDRLERGNKKRL</sequence>
<feature type="chain" id="PRO_0000142890" description="B-cell receptor-associated protein 29">
    <location>
        <begin position="1"/>
        <end position="241"/>
    </location>
</feature>
<feature type="topological domain" description="Lumenal" evidence="2">
    <location>
        <begin position="1"/>
        <end position="6"/>
    </location>
</feature>
<feature type="transmembrane region" description="Helical" evidence="2">
    <location>
        <begin position="7"/>
        <end position="27"/>
    </location>
</feature>
<feature type="topological domain" description="Cytoplasmic" evidence="2">
    <location>
        <begin position="28"/>
        <end position="43"/>
    </location>
</feature>
<feature type="transmembrane region" description="Helical" evidence="2">
    <location>
        <begin position="44"/>
        <end position="64"/>
    </location>
</feature>
<feature type="topological domain" description="Lumenal" evidence="2">
    <location>
        <begin position="65"/>
        <end position="103"/>
    </location>
</feature>
<feature type="transmembrane region" description="Helical" evidence="2">
    <location>
        <begin position="104"/>
        <end position="124"/>
    </location>
</feature>
<feature type="topological domain" description="Cytoplasmic" evidence="2">
    <location>
        <begin position="125"/>
        <end position="241"/>
    </location>
</feature>
<feature type="region of interest" description="Disordered" evidence="3">
    <location>
        <begin position="193"/>
        <end position="223"/>
    </location>
</feature>
<feature type="coiled-coil region" evidence="1">
    <location>
        <begin position="166"/>
        <end position="233"/>
    </location>
</feature>
<feature type="short sequence motif" description="Di-lysine motif">
    <location>
        <begin position="238"/>
        <end position="241"/>
    </location>
</feature>
<feature type="compositionally biased region" description="Basic and acidic residues" evidence="3">
    <location>
        <begin position="206"/>
        <end position="223"/>
    </location>
</feature>
<protein>
    <recommendedName>
        <fullName>B-cell receptor-associated protein 29</fullName>
        <shortName>BCR-associated protein 29</shortName>
        <shortName>Bap29</shortName>
    </recommendedName>
</protein>
<gene>
    <name type="primary">BCAP29</name>
</gene>
<comment type="function">
    <text evidence="1">May play a role in anterograde transport of membrane proteins from the endoplasmic reticulum to the Golgi. May be involved in CASP8-mediated apoptosis (By similarity).</text>
</comment>
<comment type="subunit">
    <text evidence="1">Homodimer and heterodimer with BCAP31. Binds CASP8 as a complex containing BCAP31, BCAP29, BCL2 and/or BCL2L1. Interacts with VAMP3, VAMP1 and membrane IgD immunoglobulins. May interact with ACTG1 and non-muscle myosin II (By similarity).</text>
</comment>
<comment type="subcellular location">
    <subcellularLocation>
        <location evidence="1">Endoplasmic reticulum membrane</location>
        <topology evidence="1">Multi-pass membrane protein</topology>
    </subcellularLocation>
</comment>
<comment type="similarity">
    <text evidence="4">Belongs to the BCAP29/BCAP31 family.</text>
</comment>
<accession>Q5R9U7</accession>
<dbReference type="EMBL" id="CR858657">
    <property type="protein sequence ID" value="CAH90870.1"/>
    <property type="molecule type" value="mRNA"/>
</dbReference>
<dbReference type="EMBL" id="CR859285">
    <property type="protein sequence ID" value="CAH91463.1"/>
    <property type="molecule type" value="mRNA"/>
</dbReference>
<dbReference type="RefSeq" id="NP_001125860.1">
    <property type="nucleotide sequence ID" value="NM_001132388.1"/>
</dbReference>
<dbReference type="RefSeq" id="XP_054414900.1">
    <property type="nucleotide sequence ID" value="XM_054558925.2"/>
</dbReference>
<dbReference type="RefSeq" id="XP_054414902.1">
    <property type="nucleotide sequence ID" value="XM_054558927.1"/>
</dbReference>
<dbReference type="RefSeq" id="XP_054414903.1">
    <property type="nucleotide sequence ID" value="XM_054558928.1"/>
</dbReference>
<dbReference type="SMR" id="Q5R9U7"/>
<dbReference type="FunCoup" id="Q5R9U7">
    <property type="interactions" value="1334"/>
</dbReference>
<dbReference type="STRING" id="9601.ENSPPYP00000020066"/>
<dbReference type="Ensembl" id="ENSPPYT00000060394.1">
    <property type="protein sequence ID" value="ENSPPYP00000045651.1"/>
    <property type="gene ID" value="ENSPPYG00000032287.1"/>
</dbReference>
<dbReference type="GeneID" id="100172790"/>
<dbReference type="KEGG" id="pon:100172790"/>
<dbReference type="CTD" id="55973"/>
<dbReference type="eggNOG" id="KOG1962">
    <property type="taxonomic scope" value="Eukaryota"/>
</dbReference>
<dbReference type="GeneTree" id="ENSGT00390000011863"/>
<dbReference type="HOGENOM" id="CLU_070975_1_0_1"/>
<dbReference type="InParanoid" id="Q5R9U7"/>
<dbReference type="OrthoDB" id="435607at2759"/>
<dbReference type="TreeFam" id="TF315310"/>
<dbReference type="Proteomes" id="UP000001595">
    <property type="component" value="Chromosome 7"/>
</dbReference>
<dbReference type="GO" id="GO:0005789">
    <property type="term" value="C:endoplasmic reticulum membrane"/>
    <property type="evidence" value="ECO:0007669"/>
    <property type="project" value="UniProtKB-SubCell"/>
</dbReference>
<dbReference type="GO" id="GO:0006915">
    <property type="term" value="P:apoptotic process"/>
    <property type="evidence" value="ECO:0007669"/>
    <property type="project" value="UniProtKB-KW"/>
</dbReference>
<dbReference type="GO" id="GO:0006888">
    <property type="term" value="P:endoplasmic reticulum to Golgi vesicle-mediated transport"/>
    <property type="evidence" value="ECO:0007669"/>
    <property type="project" value="TreeGrafter"/>
</dbReference>
<dbReference type="GO" id="GO:0006886">
    <property type="term" value="P:intracellular protein transport"/>
    <property type="evidence" value="ECO:0007669"/>
    <property type="project" value="InterPro"/>
</dbReference>
<dbReference type="GO" id="GO:0070973">
    <property type="term" value="P:protein localization to endoplasmic reticulum exit site"/>
    <property type="evidence" value="ECO:0007669"/>
    <property type="project" value="TreeGrafter"/>
</dbReference>
<dbReference type="FunFam" id="1.20.5.110:FF:000011">
    <property type="entry name" value="B-cell receptor-associated protein 29"/>
    <property type="match status" value="1"/>
</dbReference>
<dbReference type="Gene3D" id="1.20.5.110">
    <property type="match status" value="1"/>
</dbReference>
<dbReference type="InterPro" id="IPR008417">
    <property type="entry name" value="BAP29/BAP31"/>
</dbReference>
<dbReference type="InterPro" id="IPR040463">
    <property type="entry name" value="BAP29/BAP31_N"/>
</dbReference>
<dbReference type="InterPro" id="IPR041672">
    <property type="entry name" value="Bap31/Bap29_C"/>
</dbReference>
<dbReference type="PANTHER" id="PTHR12701:SF5">
    <property type="entry name" value="B-CELL RECEPTOR-ASSOCIATED PROTEIN 29"/>
    <property type="match status" value="1"/>
</dbReference>
<dbReference type="PANTHER" id="PTHR12701">
    <property type="entry name" value="BCR-ASSOCIATED PROTEIN, BAP"/>
    <property type="match status" value="1"/>
</dbReference>
<dbReference type="Pfam" id="PF05529">
    <property type="entry name" value="Bap31"/>
    <property type="match status" value="1"/>
</dbReference>
<dbReference type="Pfam" id="PF18035">
    <property type="entry name" value="Bap31_Bap29_C"/>
    <property type="match status" value="1"/>
</dbReference>